<feature type="chain" id="PRO_0000146424" description="Small ribosomal subunit protein uS12c">
    <location>
        <begin position="1"/>
        <end position="124"/>
    </location>
</feature>
<evidence type="ECO:0000250" key="1"/>
<evidence type="ECO:0000305" key="2"/>
<proteinExistence type="inferred from homology"/>
<keyword id="KW-0150">Chloroplast</keyword>
<keyword id="KW-0934">Plastid</keyword>
<keyword id="KW-0687">Ribonucleoprotein</keyword>
<keyword id="KW-0689">Ribosomal protein</keyword>
<keyword id="KW-0694">RNA-binding</keyword>
<keyword id="KW-0699">rRNA-binding</keyword>
<organism>
    <name type="scientific">Saccharum hybrid</name>
    <name type="common">Sugarcane</name>
    <dbReference type="NCBI Taxonomy" id="15819"/>
    <lineage>
        <taxon>Eukaryota</taxon>
        <taxon>Viridiplantae</taxon>
        <taxon>Streptophyta</taxon>
        <taxon>Embryophyta</taxon>
        <taxon>Tracheophyta</taxon>
        <taxon>Spermatophyta</taxon>
        <taxon>Magnoliopsida</taxon>
        <taxon>Liliopsida</taxon>
        <taxon>Poales</taxon>
        <taxon>Poaceae</taxon>
        <taxon>PACMAD clade</taxon>
        <taxon>Panicoideae</taxon>
        <taxon>Andropogonodae</taxon>
        <taxon>Andropogoneae</taxon>
        <taxon>Saccharinae</taxon>
        <taxon>Saccharum</taxon>
    </lineage>
</organism>
<reference key="1">
    <citation type="journal article" date="2004" name="Curr. Genet.">
        <title>Structural features and transcript-editing analysis of sugarcane (Saccharum officinarum L.) chloroplast genome.</title>
        <authorList>
            <person name="Calsa T. Jr."/>
            <person name="Carraro D.M."/>
            <person name="Benatti M.R."/>
            <person name="Barbosa A.C."/>
            <person name="Kitajima J.P."/>
            <person name="Carrer H."/>
        </authorList>
    </citation>
    <scope>NUCLEOTIDE SEQUENCE [LARGE SCALE GENOMIC DNA]</scope>
    <source>
        <strain>cv. SP-80-3280</strain>
    </source>
</reference>
<accession>Q6L3C7</accession>
<protein>
    <recommendedName>
        <fullName evidence="2">Small ribosomal subunit protein uS12c</fullName>
    </recommendedName>
    <alternativeName>
        <fullName>30S ribosomal protein S12, chloroplastic</fullName>
    </alternativeName>
</protein>
<comment type="function">
    <text evidence="1">With S4 and S5 plays an important role in translational accuracy. Located at the interface of the 30S and 50S subunits (By similarity).</text>
</comment>
<comment type="subunit">
    <text evidence="1">Part of the 30S ribosomal subunit.</text>
</comment>
<comment type="subcellular location">
    <subcellularLocation>
        <location>Plastid</location>
        <location>Chloroplast</location>
    </subcellularLocation>
</comment>
<comment type="similarity">
    <text evidence="2">Belongs to the universal ribosomal protein uS12 family.</text>
</comment>
<gene>
    <name type="primary">rps12</name>
    <name type="ordered locus">PS149</name>
</gene>
<geneLocation type="chloroplast"/>
<dbReference type="EMBL" id="AE009947">
    <property type="protein sequence ID" value="AAT44715.1"/>
    <property type="molecule type" value="Genomic_DNA"/>
</dbReference>
<dbReference type="SMR" id="Q6L3C7"/>
<dbReference type="GO" id="GO:0009507">
    <property type="term" value="C:chloroplast"/>
    <property type="evidence" value="ECO:0007669"/>
    <property type="project" value="UniProtKB-SubCell"/>
</dbReference>
<dbReference type="GO" id="GO:0015935">
    <property type="term" value="C:small ribosomal subunit"/>
    <property type="evidence" value="ECO:0007669"/>
    <property type="project" value="InterPro"/>
</dbReference>
<dbReference type="GO" id="GO:0019843">
    <property type="term" value="F:rRNA binding"/>
    <property type="evidence" value="ECO:0007669"/>
    <property type="project" value="UniProtKB-UniRule"/>
</dbReference>
<dbReference type="GO" id="GO:0003735">
    <property type="term" value="F:structural constituent of ribosome"/>
    <property type="evidence" value="ECO:0007669"/>
    <property type="project" value="InterPro"/>
</dbReference>
<dbReference type="GO" id="GO:0006412">
    <property type="term" value="P:translation"/>
    <property type="evidence" value="ECO:0007669"/>
    <property type="project" value="UniProtKB-UniRule"/>
</dbReference>
<dbReference type="CDD" id="cd03368">
    <property type="entry name" value="Ribosomal_S12"/>
    <property type="match status" value="1"/>
</dbReference>
<dbReference type="FunFam" id="2.40.50.140:FF:000008">
    <property type="entry name" value="30S ribosomal protein S12, chloroplastic"/>
    <property type="match status" value="1"/>
</dbReference>
<dbReference type="Gene3D" id="2.40.50.140">
    <property type="entry name" value="Nucleic acid-binding proteins"/>
    <property type="match status" value="1"/>
</dbReference>
<dbReference type="HAMAP" id="MF_00403_B">
    <property type="entry name" value="Ribosomal_uS12_B"/>
    <property type="match status" value="1"/>
</dbReference>
<dbReference type="InterPro" id="IPR012340">
    <property type="entry name" value="NA-bd_OB-fold"/>
</dbReference>
<dbReference type="InterPro" id="IPR006032">
    <property type="entry name" value="Ribosomal_uS12"/>
</dbReference>
<dbReference type="InterPro" id="IPR005679">
    <property type="entry name" value="Ribosomal_uS12_bac"/>
</dbReference>
<dbReference type="NCBIfam" id="TIGR00981">
    <property type="entry name" value="rpsL_bact"/>
    <property type="match status" value="1"/>
</dbReference>
<dbReference type="PANTHER" id="PTHR11652">
    <property type="entry name" value="30S RIBOSOMAL PROTEIN S12 FAMILY MEMBER"/>
    <property type="match status" value="1"/>
</dbReference>
<dbReference type="Pfam" id="PF00164">
    <property type="entry name" value="Ribosom_S12_S23"/>
    <property type="match status" value="1"/>
</dbReference>
<dbReference type="PIRSF" id="PIRSF002133">
    <property type="entry name" value="Ribosomal_S12/S23"/>
    <property type="match status" value="1"/>
</dbReference>
<dbReference type="PRINTS" id="PR01034">
    <property type="entry name" value="RIBOSOMALS12"/>
</dbReference>
<dbReference type="SUPFAM" id="SSF50249">
    <property type="entry name" value="Nucleic acid-binding proteins"/>
    <property type="match status" value="1"/>
</dbReference>
<dbReference type="PROSITE" id="PS00055">
    <property type="entry name" value="RIBOSOMAL_S12"/>
    <property type="match status" value="1"/>
</dbReference>
<name>RR12_SACHY</name>
<sequence>MPTVKQLIRNARQPIRNARKSAALKGCPQRRGTCARVYTINPKKPNSALRKVARVRLTSGFEITAYIPGIGHNLQEHSVVLVRGGRVKDLPGVRYRIIRGTLDAVAVKNRQQGRSKYGAKKPKK</sequence>